<gene>
    <name evidence="5" type="primary">GMPPA</name>
</gene>
<sequence length="420" mass="46291">MLKAVILIGGPQKGTRFRPLSFEVPKPLFPVAGVPMIQHHIEACAQVPGMQEILLIGFYQPDEPLTQFLEAAQQEFNLPVRYLQEFAPLGTGGGLYHFRDQILAGSPEAFFVLNADVCSDFPLSAMLEAHRRQRHPFLLLGTTANRTQSLNYGCIVENPQTHEVLHYVEKPSTFISDIINCGIYLFSPEALKPLRDVFQRNQQDGQLEDSPGLWPGAGTIRLEQDVFSALAGQGQIYVHLTDGIWSQIKSAGSALYASRLYLSRYQDTHPERLAKHTPGGPWIRGNVYIHPTAKVAPSAVLGPNVSIGKGVTVGEGVRLRESIVLHGATLQEHTCVLHSIVGWGSTVGRWARVEGTPSDPNPNDPRARMDSESLFKDGKLLPAITILGCRVRIPAEVLILNSIVLPHKELSRSFTNQIIL</sequence>
<comment type="function">
    <text evidence="1 2">Regulatory subunit of the GMPPA-GMPPB mannose-1-phosphate guanylyltransferase complex; reduces the catalytic activity of GMPPB when part of the complex (PubMed:24035193, PubMed:33986552). Mediates allosteric feedback inhibition of GMPPB catalytic activity upon binding GDP-alpha-D-mannose (PubMed:24035193, PubMed:33986552). Together with GMPPB regulates GDP-alpha-D-mannose levels (PubMed:33986552).</text>
</comment>
<comment type="subunit">
    <text evidence="2">Component of the GMPPA-GMPPB mannose-1-phosphate guanylyltransferase complex composed of 4 GMPPA subunits and 8 GMPPB subunits; the complex is organized into three layers, a central layer made up of 2 GMPPA dimers sandwiched between two layers each made up of 2 GMPPB dimers.</text>
</comment>
<comment type="interaction">
    <interactant intactId="EBI-750953">
        <id>Q96IJ6</id>
    </interactant>
    <interactant intactId="EBI-10988864">
        <id>P46379-2</id>
        <label>BAG6</label>
    </interactant>
    <organismsDiffer>false</organismsDiffer>
    <experiments>3</experiments>
</comment>
<comment type="interaction">
    <interactant intactId="EBI-750953">
        <id>Q96IJ6</id>
    </interactant>
    <interactant intactId="EBI-6590057">
        <id>P35070</id>
        <label>BTC</label>
    </interactant>
    <organismsDiffer>false</organismsDiffer>
    <experiments>6</experiments>
</comment>
<comment type="interaction">
    <interactant intactId="EBI-750953">
        <id>Q96IJ6</id>
    </interactant>
    <interactant intactId="EBI-1395983">
        <id>P02741</id>
        <label>CRP</label>
    </interactant>
    <organismsDiffer>false</organismsDiffer>
    <experiments>3</experiments>
</comment>
<comment type="interaction">
    <interactant intactId="EBI-750953">
        <id>Q96IJ6</id>
    </interactant>
    <interactant intactId="EBI-740086">
        <id>Q96GG9</id>
        <label>DCUN1D1</label>
    </interactant>
    <organismsDiffer>false</organismsDiffer>
    <experiments>3</experiments>
</comment>
<comment type="interaction">
    <interactant intactId="EBI-750953">
        <id>Q96IJ6</id>
    </interactant>
    <interactant intactId="EBI-395638">
        <id>O14645</id>
        <label>DNALI1</label>
    </interactant>
    <organismsDiffer>false</organismsDiffer>
    <experiments>3</experiments>
</comment>
<comment type="interaction">
    <interactant intactId="EBI-750953">
        <id>Q96IJ6</id>
    </interactant>
    <interactant intactId="EBI-750300">
        <id>Q01658</id>
        <label>DR1</label>
    </interactant>
    <organismsDiffer>false</organismsDiffer>
    <experiments>3</experiments>
</comment>
<comment type="interaction">
    <interactant intactId="EBI-750953">
        <id>Q96IJ6</id>
    </interactant>
    <interactant intactId="EBI-750945">
        <id>Q9Y5P6</id>
        <label>GMPPB</label>
    </interactant>
    <organismsDiffer>false</organismsDiffer>
    <experiments>10</experiments>
</comment>
<comment type="interaction">
    <interactant intactId="EBI-750953">
        <id>Q96IJ6</id>
    </interactant>
    <interactant intactId="EBI-746309">
        <id>Q92917</id>
        <label>GPKOW</label>
    </interactant>
    <organismsDiffer>false</organismsDiffer>
    <experiments>3</experiments>
</comment>
<comment type="interaction">
    <interactant intactId="EBI-750953">
        <id>Q96IJ6</id>
    </interactant>
    <interactant intactId="EBI-1054873">
        <id>Q9Y5Q9</id>
        <label>GTF3C3</label>
    </interactant>
    <organismsDiffer>false</organismsDiffer>
    <experiments>3</experiments>
</comment>
<comment type="interaction">
    <interactant intactId="EBI-750953">
        <id>Q96IJ6</id>
    </interactant>
    <interactant intactId="EBI-948266">
        <id>O14901</id>
        <label>KLF11</label>
    </interactant>
    <organismsDiffer>false</organismsDiffer>
    <experiments>3</experiments>
</comment>
<comment type="interaction">
    <interactant intactId="EBI-750953">
        <id>Q96IJ6</id>
    </interactant>
    <interactant intactId="EBI-16429340">
        <id>A0A0S2Z4D7</id>
        <label>NCK1</label>
    </interactant>
    <organismsDiffer>false</organismsDiffer>
    <experiments>3</experiments>
</comment>
<comment type="interaction">
    <interactant intactId="EBI-750953">
        <id>Q96IJ6</id>
    </interactant>
    <interactant intactId="EBI-372899">
        <id>Q13148</id>
        <label>TARDBP</label>
    </interactant>
    <organismsDiffer>false</organismsDiffer>
    <experiments>6</experiments>
</comment>
<comment type="interaction">
    <interactant intactId="EBI-750953">
        <id>Q96IJ6</id>
    </interactant>
    <interactant intactId="EBI-16429989">
        <id>A0A0S2Z6P0</id>
        <label>ZNF688</label>
    </interactant>
    <organismsDiffer>false</organismsDiffer>
    <experiments>3</experiments>
</comment>
<comment type="subcellular location">
    <subcellularLocation>
        <location evidence="1">Cytoplasm</location>
    </subcellularLocation>
    <text>Myc-tagged GMPPA shows a diffuse cytoplasmic and nuclear pattern in transfected COS-7 cells.</text>
</comment>
<comment type="alternative products">
    <event type="alternative splicing"/>
    <isoform>
        <id>Q96IJ6-1</id>
        <name>1</name>
        <sequence type="displayed"/>
    </isoform>
    <isoform>
        <id>Q96IJ6-2</id>
        <name>2</name>
        <sequence type="described" ref="VSP_032741"/>
    </isoform>
</comment>
<comment type="tissue specificity">
    <text evidence="1">Expressed in fibroblasts (at protein level).</text>
</comment>
<comment type="domain">
    <text evidence="2">The N-terminal substrate-binding domain adopts a Rossman-like fold and has a binding pocket for GTP or GDP-alpha-D-mannose.</text>
</comment>
<comment type="domain">
    <text evidence="2">The C-terminal domain consists of a series of tandem hexapeptide repeats that adopt a beta-helix conformation (PubMed:33986552). The beta-helix forms several protein interaction surfaces involved in assembly of the GMPPA-GMPPB mannose-1-phosphate guanylyltransferase complex (PubMed:33986552). A loop extending from the C-terminal domain (C-loop) is involved in interaction with other subunits of the GMPPA-GMPPB complex and may be involved in allosteric inhibition of GMPPB catalytic activity by GMPPA (PubMed:33986552).</text>
</comment>
<comment type="disease" evidence="1 2">
    <disease id="DI-03937">
        <name>Alacrima, achalasia, and impaired intellectual development syndrome</name>
        <acronym>AAMR</acronym>
        <description>An autosomal recessive disorder characterized by onset of alacrima, achalasia, and intellectual disability at birth or in early infancy. More variable features include hypotonia, gait abnormalities, anisocoria, and visual or hearing deficits. The disorder shows similarity to the triple A syndrome, but patients with AAMR do not have adrenal insufficiency.</description>
        <dbReference type="MIM" id="615510"/>
    </disease>
    <text>The disease is caused by variants affecting the gene represented in this entry.</text>
</comment>
<comment type="similarity">
    <text evidence="4">Belongs to the transferase hexapeptide repeat family.</text>
</comment>
<comment type="sequence caution" evidence="3">
    <conflict type="frameshift">
        <sequence resource="EMBL-CDS" id="AAD38517"/>
    </conflict>
</comment>
<keyword id="KW-0002">3D-structure</keyword>
<keyword id="KW-0025">Alternative splicing</keyword>
<keyword id="KW-0963">Cytoplasm</keyword>
<keyword id="KW-0225">Disease variant</keyword>
<keyword id="KW-0991">Intellectual disability</keyword>
<keyword id="KW-1267">Proteomics identification</keyword>
<keyword id="KW-1185">Reference proteome</keyword>
<name>GMPPA_HUMAN</name>
<dbReference type="EMBL" id="AF135422">
    <property type="protein sequence ID" value="AAD38517.1"/>
    <property type="status" value="ALT_FRAME"/>
    <property type="molecule type" value="mRNA"/>
</dbReference>
<dbReference type="EMBL" id="AK000999">
    <property type="protein sequence ID" value="BAA91460.1"/>
    <property type="molecule type" value="mRNA"/>
</dbReference>
<dbReference type="EMBL" id="AK022578">
    <property type="protein sequence ID" value="BAG51096.1"/>
    <property type="molecule type" value="mRNA"/>
</dbReference>
<dbReference type="EMBL" id="AK290671">
    <property type="protein sequence ID" value="BAF83360.1"/>
    <property type="molecule type" value="mRNA"/>
</dbReference>
<dbReference type="EMBL" id="AK222951">
    <property type="protein sequence ID" value="BAD96671.1"/>
    <property type="molecule type" value="mRNA"/>
</dbReference>
<dbReference type="EMBL" id="AC053503">
    <property type="protein sequence ID" value="AAY15053.1"/>
    <property type="molecule type" value="Genomic_DNA"/>
</dbReference>
<dbReference type="EMBL" id="CH471063">
    <property type="protein sequence ID" value="EAW70755.1"/>
    <property type="molecule type" value="Genomic_DNA"/>
</dbReference>
<dbReference type="EMBL" id="CH471063">
    <property type="protein sequence ID" value="EAW70759.1"/>
    <property type="molecule type" value="Genomic_DNA"/>
</dbReference>
<dbReference type="EMBL" id="BC007456">
    <property type="protein sequence ID" value="AAH07456.1"/>
    <property type="molecule type" value="mRNA"/>
</dbReference>
<dbReference type="CCDS" id="CCDS2441.1">
    <molecule id="Q96IJ6-1"/>
</dbReference>
<dbReference type="RefSeq" id="NP_001361223.1">
    <molecule id="Q96IJ6-1"/>
    <property type="nucleotide sequence ID" value="NM_001374294.1"/>
</dbReference>
<dbReference type="RefSeq" id="NP_001361224.1">
    <molecule id="Q96IJ6-1"/>
    <property type="nucleotide sequence ID" value="NM_001374295.1"/>
</dbReference>
<dbReference type="RefSeq" id="NP_037467.2">
    <molecule id="Q96IJ6-1"/>
    <property type="nucleotide sequence ID" value="NM_013335.3"/>
</dbReference>
<dbReference type="RefSeq" id="NP_995319.1">
    <molecule id="Q96IJ6-1"/>
    <property type="nucleotide sequence ID" value="NM_205847.3"/>
</dbReference>
<dbReference type="RefSeq" id="XP_005246543.1">
    <property type="nucleotide sequence ID" value="XM_005246486.3"/>
</dbReference>
<dbReference type="RefSeq" id="XP_016859398.1">
    <property type="nucleotide sequence ID" value="XM_017003909.1"/>
</dbReference>
<dbReference type="RefSeq" id="XP_016859399.1">
    <property type="nucleotide sequence ID" value="XM_017003910.1"/>
</dbReference>
<dbReference type="RefSeq" id="XP_016859400.1">
    <property type="nucleotide sequence ID" value="XM_017003911.1"/>
</dbReference>
<dbReference type="RefSeq" id="XP_047299983.1">
    <molecule id="Q96IJ6-2"/>
    <property type="nucleotide sequence ID" value="XM_047444027.1"/>
</dbReference>
<dbReference type="RefSeq" id="XP_047299984.1">
    <molecule id="Q96IJ6-2"/>
    <property type="nucleotide sequence ID" value="XM_047444028.1"/>
</dbReference>
<dbReference type="RefSeq" id="XP_047299985.1">
    <molecule id="Q96IJ6-2"/>
    <property type="nucleotide sequence ID" value="XM_047444029.1"/>
</dbReference>
<dbReference type="RefSeq" id="XP_054197533.1">
    <molecule id="Q96IJ6-2"/>
    <property type="nucleotide sequence ID" value="XM_054341558.1"/>
</dbReference>
<dbReference type="RefSeq" id="XP_054197534.1">
    <molecule id="Q96IJ6-2"/>
    <property type="nucleotide sequence ID" value="XM_054341559.1"/>
</dbReference>
<dbReference type="RefSeq" id="XP_054197535.1">
    <molecule id="Q96IJ6-2"/>
    <property type="nucleotide sequence ID" value="XM_054341560.1"/>
</dbReference>
<dbReference type="PDB" id="7D72">
    <property type="method" value="EM"/>
    <property type="resolution" value="3.40 A"/>
    <property type="chains" value="A/B/C/D=1-420"/>
</dbReference>
<dbReference type="PDB" id="7D73">
    <property type="method" value="EM"/>
    <property type="resolution" value="3.00 A"/>
    <property type="chains" value="A/B/C/D=1-420"/>
</dbReference>
<dbReference type="PDB" id="7D74">
    <property type="method" value="EM"/>
    <property type="resolution" value="3.10 A"/>
    <property type="chains" value="A/B/C/D=1-420"/>
</dbReference>
<dbReference type="PDBsum" id="7D72"/>
<dbReference type="PDBsum" id="7D73"/>
<dbReference type="PDBsum" id="7D74"/>
<dbReference type="EMDB" id="EMD-30599"/>
<dbReference type="EMDB" id="EMD-30600"/>
<dbReference type="EMDB" id="EMD-30601"/>
<dbReference type="SMR" id="Q96IJ6"/>
<dbReference type="BioGRID" id="118967">
    <property type="interactions" value="59"/>
</dbReference>
<dbReference type="ComplexPortal" id="CPX-2234">
    <property type="entry name" value="Mannose-1-phosphate guanyltransferase complex"/>
</dbReference>
<dbReference type="FunCoup" id="Q96IJ6">
    <property type="interactions" value="559"/>
</dbReference>
<dbReference type="IntAct" id="Q96IJ6">
    <property type="interactions" value="33"/>
</dbReference>
<dbReference type="MINT" id="Q96IJ6"/>
<dbReference type="STRING" id="9606.ENSP00000350949"/>
<dbReference type="GlyGen" id="Q96IJ6">
    <property type="glycosylation" value="2 sites, 1 N-linked glycan (1 site), 1 O-linked glycan (1 site)"/>
</dbReference>
<dbReference type="iPTMnet" id="Q96IJ6"/>
<dbReference type="PhosphoSitePlus" id="Q96IJ6"/>
<dbReference type="BioMuta" id="GMPPA"/>
<dbReference type="DMDM" id="74732065"/>
<dbReference type="jPOST" id="Q96IJ6"/>
<dbReference type="MassIVE" id="Q96IJ6"/>
<dbReference type="PaxDb" id="9606-ENSP00000350949"/>
<dbReference type="PeptideAtlas" id="Q96IJ6"/>
<dbReference type="ProteomicsDB" id="76833">
    <molecule id="Q96IJ6-1"/>
</dbReference>
<dbReference type="ProteomicsDB" id="76834">
    <molecule id="Q96IJ6-2"/>
</dbReference>
<dbReference type="Pumba" id="Q96IJ6"/>
<dbReference type="Antibodypedia" id="34335">
    <property type="antibodies" value="134 antibodies from 23 providers"/>
</dbReference>
<dbReference type="DNASU" id="29926"/>
<dbReference type="Ensembl" id="ENST00000313597.10">
    <molecule id="Q96IJ6-1"/>
    <property type="protein sequence ID" value="ENSP00000315925.6"/>
    <property type="gene ID" value="ENSG00000144591.20"/>
</dbReference>
<dbReference type="Ensembl" id="ENST00000341142.8">
    <molecule id="Q96IJ6-1"/>
    <property type="protein sequence ID" value="ENSP00000340760.3"/>
    <property type="gene ID" value="ENSG00000144591.20"/>
</dbReference>
<dbReference type="Ensembl" id="ENST00000358215.8">
    <molecule id="Q96IJ6-1"/>
    <property type="protein sequence ID" value="ENSP00000350949.3"/>
    <property type="gene ID" value="ENSG00000144591.20"/>
</dbReference>
<dbReference type="Ensembl" id="ENST00000373908.5">
    <molecule id="Q96IJ6-1"/>
    <property type="protein sequence ID" value="ENSP00000363016.1"/>
    <property type="gene ID" value="ENSG00000144591.20"/>
</dbReference>
<dbReference type="Ensembl" id="ENST00000373917.7">
    <molecule id="Q96IJ6-2"/>
    <property type="protein sequence ID" value="ENSP00000363027.3"/>
    <property type="gene ID" value="ENSG00000144591.20"/>
</dbReference>
<dbReference type="Ensembl" id="ENST00000622191.2">
    <molecule id="Q96IJ6-1"/>
    <property type="protein sequence ID" value="ENSP00000478700.2"/>
    <property type="gene ID" value="ENSG00000144591.20"/>
</dbReference>
<dbReference type="Ensembl" id="ENST00000683946.1">
    <molecule id="Q96IJ6-1"/>
    <property type="protein sequence ID" value="ENSP00000506941.1"/>
    <property type="gene ID" value="ENSG00000144591.20"/>
</dbReference>
<dbReference type="GeneID" id="29926"/>
<dbReference type="KEGG" id="hsa:29926"/>
<dbReference type="MANE-Select" id="ENST00000313597.10">
    <property type="protein sequence ID" value="ENSP00000315925.6"/>
    <property type="RefSeq nucleotide sequence ID" value="NM_013335.4"/>
    <property type="RefSeq protein sequence ID" value="NP_037467.2"/>
</dbReference>
<dbReference type="UCSC" id="uc002vlr.4">
    <molecule id="Q96IJ6-1"/>
    <property type="organism name" value="human"/>
</dbReference>
<dbReference type="AGR" id="HGNC:22923"/>
<dbReference type="CTD" id="29926"/>
<dbReference type="DisGeNET" id="29926"/>
<dbReference type="GeneCards" id="GMPPA"/>
<dbReference type="HGNC" id="HGNC:22923">
    <property type="gene designation" value="GMPPA"/>
</dbReference>
<dbReference type="HPA" id="ENSG00000144591">
    <property type="expression patterns" value="Low tissue specificity"/>
</dbReference>
<dbReference type="MalaCards" id="GMPPA"/>
<dbReference type="MIM" id="615495">
    <property type="type" value="gene"/>
</dbReference>
<dbReference type="MIM" id="615510">
    <property type="type" value="phenotype"/>
</dbReference>
<dbReference type="neXtProt" id="NX_Q96IJ6"/>
<dbReference type="OpenTargets" id="ENSG00000144591"/>
<dbReference type="Orphanet" id="869">
    <property type="disease" value="Triple A syndrome"/>
</dbReference>
<dbReference type="PharmGKB" id="PA134925506"/>
<dbReference type="VEuPathDB" id="HostDB:ENSG00000144591"/>
<dbReference type="eggNOG" id="KOG1460">
    <property type="taxonomic scope" value="Eukaryota"/>
</dbReference>
<dbReference type="GeneTree" id="ENSGT00940000157018"/>
<dbReference type="HOGENOM" id="CLU_029499_3_0_1"/>
<dbReference type="InParanoid" id="Q96IJ6"/>
<dbReference type="OMA" id="MPVPNWW"/>
<dbReference type="OrthoDB" id="285674at2759"/>
<dbReference type="PAN-GO" id="Q96IJ6">
    <property type="GO annotations" value="1 GO annotation based on evolutionary models"/>
</dbReference>
<dbReference type="PhylomeDB" id="Q96IJ6"/>
<dbReference type="TreeFam" id="TF300832"/>
<dbReference type="PathwayCommons" id="Q96IJ6"/>
<dbReference type="Reactome" id="R-HSA-446205">
    <property type="pathway name" value="Synthesis of GDP-mannose"/>
</dbReference>
<dbReference type="SignaLink" id="Q96IJ6"/>
<dbReference type="BioGRID-ORCS" id="29926">
    <property type="hits" value="11 hits in 1162 CRISPR screens"/>
</dbReference>
<dbReference type="ChiTaRS" id="GMPPA">
    <property type="organism name" value="human"/>
</dbReference>
<dbReference type="GenomeRNAi" id="29926"/>
<dbReference type="Pharos" id="Q96IJ6">
    <property type="development level" value="Tbio"/>
</dbReference>
<dbReference type="PRO" id="PR:Q96IJ6"/>
<dbReference type="Proteomes" id="UP000005640">
    <property type="component" value="Chromosome 2"/>
</dbReference>
<dbReference type="RNAct" id="Q96IJ6">
    <property type="molecule type" value="protein"/>
</dbReference>
<dbReference type="Bgee" id="ENSG00000144591">
    <property type="expression patterns" value="Expressed in body of pancreas and 170 other cell types or tissues"/>
</dbReference>
<dbReference type="ExpressionAtlas" id="Q96IJ6">
    <property type="expression patterns" value="baseline and differential"/>
</dbReference>
<dbReference type="GO" id="GO:0005737">
    <property type="term" value="C:cytoplasm"/>
    <property type="evidence" value="ECO:0000318"/>
    <property type="project" value="GO_Central"/>
</dbReference>
<dbReference type="GO" id="GO:0005829">
    <property type="term" value="C:cytosol"/>
    <property type="evidence" value="ECO:0000304"/>
    <property type="project" value="Reactome"/>
</dbReference>
<dbReference type="GO" id="GO:0070062">
    <property type="term" value="C:extracellular exosome"/>
    <property type="evidence" value="ECO:0007005"/>
    <property type="project" value="UniProtKB"/>
</dbReference>
<dbReference type="GO" id="GO:0120508">
    <property type="term" value="C:GDP-mannose pyrophosphorylase complex"/>
    <property type="evidence" value="ECO:0000314"/>
    <property type="project" value="FlyBase"/>
</dbReference>
<dbReference type="GO" id="GO:0019899">
    <property type="term" value="F:enzyme binding"/>
    <property type="evidence" value="ECO:0000353"/>
    <property type="project" value="FlyBase"/>
</dbReference>
<dbReference type="GO" id="GO:0004857">
    <property type="term" value="F:enzyme inhibitor activity"/>
    <property type="evidence" value="ECO:0000314"/>
    <property type="project" value="FlyBase"/>
</dbReference>
<dbReference type="GO" id="GO:0140299">
    <property type="term" value="F:molecular sensor activity"/>
    <property type="evidence" value="ECO:0000314"/>
    <property type="project" value="FlyBase"/>
</dbReference>
<dbReference type="GO" id="GO:0016740">
    <property type="term" value="F:transferase activity"/>
    <property type="evidence" value="ECO:0007669"/>
    <property type="project" value="InterPro"/>
</dbReference>
<dbReference type="GO" id="GO:0050890">
    <property type="term" value="P:cognition"/>
    <property type="evidence" value="ECO:0007669"/>
    <property type="project" value="Ensembl"/>
</dbReference>
<dbReference type="GO" id="GO:0009298">
    <property type="term" value="P:GDP-mannose biosynthetic process"/>
    <property type="evidence" value="ECO:0007669"/>
    <property type="project" value="Ensembl"/>
</dbReference>
<dbReference type="GO" id="GO:0019673">
    <property type="term" value="P:GDP-mannose metabolic process"/>
    <property type="evidence" value="ECO:0000315"/>
    <property type="project" value="FlyBase"/>
</dbReference>
<dbReference type="GO" id="GO:0061744">
    <property type="term" value="P:motor behavior"/>
    <property type="evidence" value="ECO:0007669"/>
    <property type="project" value="Ensembl"/>
</dbReference>
<dbReference type="GO" id="GO:0048644">
    <property type="term" value="P:muscle organ morphogenesis"/>
    <property type="evidence" value="ECO:0007669"/>
    <property type="project" value="Ensembl"/>
</dbReference>
<dbReference type="GO" id="GO:0009890">
    <property type="term" value="P:negative regulation of biosynthetic process"/>
    <property type="evidence" value="ECO:0007669"/>
    <property type="project" value="Ensembl"/>
</dbReference>
<dbReference type="GO" id="GO:0045934">
    <property type="term" value="P:negative regulation of nucleobase-containing compound metabolic process"/>
    <property type="evidence" value="ECO:0007669"/>
    <property type="project" value="Ensembl"/>
</dbReference>
<dbReference type="GO" id="GO:0045936">
    <property type="term" value="P:negative regulation of phosphate metabolic process"/>
    <property type="evidence" value="ECO:0007669"/>
    <property type="project" value="Ensembl"/>
</dbReference>
<dbReference type="GO" id="GO:0062014">
    <property type="term" value="P:negative regulation of small molecule metabolic process"/>
    <property type="evidence" value="ECO:0007669"/>
    <property type="project" value="Ensembl"/>
</dbReference>
<dbReference type="GO" id="GO:0050905">
    <property type="term" value="P:neuromuscular process"/>
    <property type="evidence" value="ECO:0007669"/>
    <property type="project" value="Ensembl"/>
</dbReference>
<dbReference type="GO" id="GO:0051402">
    <property type="term" value="P:neuron apoptotic process"/>
    <property type="evidence" value="ECO:0007669"/>
    <property type="project" value="Ensembl"/>
</dbReference>
<dbReference type="GO" id="GO:0006486">
    <property type="term" value="P:protein glycosylation"/>
    <property type="evidence" value="ECO:0007669"/>
    <property type="project" value="Ensembl"/>
</dbReference>
<dbReference type="GO" id="GO:0060538">
    <property type="term" value="P:skeletal muscle organ development"/>
    <property type="evidence" value="ECO:0007669"/>
    <property type="project" value="Ensembl"/>
</dbReference>
<dbReference type="GO" id="GO:0021537">
    <property type="term" value="P:telencephalon development"/>
    <property type="evidence" value="ECO:0007669"/>
    <property type="project" value="Ensembl"/>
</dbReference>
<dbReference type="CDD" id="cd06428">
    <property type="entry name" value="M1P_guanylylT_A_like_N"/>
    <property type="match status" value="1"/>
</dbReference>
<dbReference type="FunFam" id="3.90.550.10:FF:000071">
    <property type="entry name" value="Mannose-1-phosphate guanyltransferase alpha"/>
    <property type="match status" value="1"/>
</dbReference>
<dbReference type="FunFam" id="2.160.10.10:FF:000023">
    <property type="entry name" value="Mannose-1-phosphate guanyltransferase alpha (Predicted)"/>
    <property type="match status" value="1"/>
</dbReference>
<dbReference type="Gene3D" id="2.160.10.10">
    <property type="entry name" value="Hexapeptide repeat proteins"/>
    <property type="match status" value="1"/>
</dbReference>
<dbReference type="Gene3D" id="3.90.550.10">
    <property type="entry name" value="Spore Coat Polysaccharide Biosynthesis Protein SpsA, Chain A"/>
    <property type="match status" value="1"/>
</dbReference>
<dbReference type="InterPro" id="IPR056729">
    <property type="entry name" value="GMPPB_C"/>
</dbReference>
<dbReference type="InterPro" id="IPR018357">
    <property type="entry name" value="Hexapep_transf_CS"/>
</dbReference>
<dbReference type="InterPro" id="IPR050486">
    <property type="entry name" value="Mannose-1P_guanyltransferase"/>
</dbReference>
<dbReference type="InterPro" id="IPR005835">
    <property type="entry name" value="NTP_transferase_dom"/>
</dbReference>
<dbReference type="InterPro" id="IPR029044">
    <property type="entry name" value="Nucleotide-diphossugar_trans"/>
</dbReference>
<dbReference type="PANTHER" id="PTHR22572">
    <property type="entry name" value="SUGAR-1-PHOSPHATE GUANYL TRANSFERASE"/>
    <property type="match status" value="1"/>
</dbReference>
<dbReference type="Pfam" id="PF25087">
    <property type="entry name" value="GMPPB_C"/>
    <property type="match status" value="1"/>
</dbReference>
<dbReference type="Pfam" id="PF00483">
    <property type="entry name" value="NTP_transferase"/>
    <property type="match status" value="1"/>
</dbReference>
<dbReference type="SUPFAM" id="SSF53448">
    <property type="entry name" value="Nucleotide-diphospho-sugar transferases"/>
    <property type="match status" value="1"/>
</dbReference>
<dbReference type="PROSITE" id="PS00101">
    <property type="entry name" value="HEXAPEP_TRANSFERASES"/>
    <property type="match status" value="1"/>
</dbReference>
<proteinExistence type="evidence at protein level"/>
<evidence type="ECO:0000269" key="1">
    <source>
    </source>
</evidence>
<evidence type="ECO:0000269" key="2">
    <source>
    </source>
</evidence>
<evidence type="ECO:0000305" key="3"/>
<evidence type="ECO:0000305" key="4">
    <source>
    </source>
</evidence>
<evidence type="ECO:0000312" key="5">
    <source>
        <dbReference type="HGNC" id="HGNC:22923"/>
    </source>
</evidence>
<evidence type="ECO:0000312" key="6">
    <source>
        <dbReference type="PDB" id="7D72"/>
    </source>
</evidence>
<evidence type="ECO:0000312" key="7">
    <source>
        <dbReference type="PDB" id="7D73"/>
    </source>
</evidence>
<evidence type="ECO:0000312" key="8">
    <source>
        <dbReference type="PDB" id="7D74"/>
    </source>
</evidence>
<evidence type="ECO:0000312" key="9">
    <source>
        <dbReference type="Proteomes" id="UP000005640"/>
    </source>
</evidence>
<evidence type="ECO:0007829" key="10">
    <source>
        <dbReference type="PDB" id="7D72"/>
    </source>
</evidence>
<evidence type="ECO:0007829" key="11">
    <source>
        <dbReference type="PDB" id="7D73"/>
    </source>
</evidence>
<evidence type="ECO:0007829" key="12">
    <source>
        <dbReference type="PDB" id="7D74"/>
    </source>
</evidence>
<protein>
    <recommendedName>
        <fullName evidence="3">Mannose-1-phosphate guanylyltransferase regulatory subunit alpha</fullName>
    </recommendedName>
    <alternativeName>
        <fullName>GDP-mannose pyrophosphorylase A</fullName>
        <shortName>GMPP-alpha</shortName>
    </alternativeName>
    <alternativeName>
        <fullName>GTP-mannose-1-phosphate guanylyltransferase alpha</fullName>
    </alternativeName>
</protein>
<reference key="1">
    <citation type="submission" date="1999-03" db="EMBL/GenBank/DDBJ databases">
        <title>Human homolog of GDP-mannose pyrophosphorylase.</title>
        <authorList>
            <person name="Matthijs G."/>
            <person name="Schollen E."/>
            <person name="Dierickx D."/>
        </authorList>
    </citation>
    <scope>NUCLEOTIDE SEQUENCE [MRNA] (ISOFORM 1)</scope>
</reference>
<reference key="2">
    <citation type="journal article" date="2004" name="Nat. Genet.">
        <title>Complete sequencing and characterization of 21,243 full-length human cDNAs.</title>
        <authorList>
            <person name="Ota T."/>
            <person name="Suzuki Y."/>
            <person name="Nishikawa T."/>
            <person name="Otsuki T."/>
            <person name="Sugiyama T."/>
            <person name="Irie R."/>
            <person name="Wakamatsu A."/>
            <person name="Hayashi K."/>
            <person name="Sato H."/>
            <person name="Nagai K."/>
            <person name="Kimura K."/>
            <person name="Makita H."/>
            <person name="Sekine M."/>
            <person name="Obayashi M."/>
            <person name="Nishi T."/>
            <person name="Shibahara T."/>
            <person name="Tanaka T."/>
            <person name="Ishii S."/>
            <person name="Yamamoto J."/>
            <person name="Saito K."/>
            <person name="Kawai Y."/>
            <person name="Isono Y."/>
            <person name="Nakamura Y."/>
            <person name="Nagahari K."/>
            <person name="Murakami K."/>
            <person name="Yasuda T."/>
            <person name="Iwayanagi T."/>
            <person name="Wagatsuma M."/>
            <person name="Shiratori A."/>
            <person name="Sudo H."/>
            <person name="Hosoiri T."/>
            <person name="Kaku Y."/>
            <person name="Kodaira H."/>
            <person name="Kondo H."/>
            <person name="Sugawara M."/>
            <person name="Takahashi M."/>
            <person name="Kanda K."/>
            <person name="Yokoi T."/>
            <person name="Furuya T."/>
            <person name="Kikkawa E."/>
            <person name="Omura Y."/>
            <person name="Abe K."/>
            <person name="Kamihara K."/>
            <person name="Katsuta N."/>
            <person name="Sato K."/>
            <person name="Tanikawa M."/>
            <person name="Yamazaki M."/>
            <person name="Ninomiya K."/>
            <person name="Ishibashi T."/>
            <person name="Yamashita H."/>
            <person name="Murakawa K."/>
            <person name="Fujimori K."/>
            <person name="Tanai H."/>
            <person name="Kimata M."/>
            <person name="Watanabe M."/>
            <person name="Hiraoka S."/>
            <person name="Chiba Y."/>
            <person name="Ishida S."/>
            <person name="Ono Y."/>
            <person name="Takiguchi S."/>
            <person name="Watanabe S."/>
            <person name="Yosida M."/>
            <person name="Hotuta T."/>
            <person name="Kusano J."/>
            <person name="Kanehori K."/>
            <person name="Takahashi-Fujii A."/>
            <person name="Hara H."/>
            <person name="Tanase T.-O."/>
            <person name="Nomura Y."/>
            <person name="Togiya S."/>
            <person name="Komai F."/>
            <person name="Hara R."/>
            <person name="Takeuchi K."/>
            <person name="Arita M."/>
            <person name="Imose N."/>
            <person name="Musashino K."/>
            <person name="Yuuki H."/>
            <person name="Oshima A."/>
            <person name="Sasaki N."/>
            <person name="Aotsuka S."/>
            <person name="Yoshikawa Y."/>
            <person name="Matsunawa H."/>
            <person name="Ichihara T."/>
            <person name="Shiohata N."/>
            <person name="Sano S."/>
            <person name="Moriya S."/>
            <person name="Momiyama H."/>
            <person name="Satoh N."/>
            <person name="Takami S."/>
            <person name="Terashima Y."/>
            <person name="Suzuki O."/>
            <person name="Nakagawa S."/>
            <person name="Senoh A."/>
            <person name="Mizoguchi H."/>
            <person name="Goto Y."/>
            <person name="Shimizu F."/>
            <person name="Wakebe H."/>
            <person name="Hishigaki H."/>
            <person name="Watanabe T."/>
            <person name="Sugiyama A."/>
            <person name="Takemoto M."/>
            <person name="Kawakami B."/>
            <person name="Yamazaki M."/>
            <person name="Watanabe K."/>
            <person name="Kumagai A."/>
            <person name="Itakura S."/>
            <person name="Fukuzumi Y."/>
            <person name="Fujimori Y."/>
            <person name="Komiyama M."/>
            <person name="Tashiro H."/>
            <person name="Tanigami A."/>
            <person name="Fujiwara T."/>
            <person name="Ono T."/>
            <person name="Yamada K."/>
            <person name="Fujii Y."/>
            <person name="Ozaki K."/>
            <person name="Hirao M."/>
            <person name="Ohmori Y."/>
            <person name="Kawabata A."/>
            <person name="Hikiji T."/>
            <person name="Kobatake N."/>
            <person name="Inagaki H."/>
            <person name="Ikema Y."/>
            <person name="Okamoto S."/>
            <person name="Okitani R."/>
            <person name="Kawakami T."/>
            <person name="Noguchi S."/>
            <person name="Itoh T."/>
            <person name="Shigeta K."/>
            <person name="Senba T."/>
            <person name="Matsumura K."/>
            <person name="Nakajima Y."/>
            <person name="Mizuno T."/>
            <person name="Morinaga M."/>
            <person name="Sasaki M."/>
            <person name="Togashi T."/>
            <person name="Oyama M."/>
            <person name="Hata H."/>
            <person name="Watanabe M."/>
            <person name="Komatsu T."/>
            <person name="Mizushima-Sugano J."/>
            <person name="Satoh T."/>
            <person name="Shirai Y."/>
            <person name="Takahashi Y."/>
            <person name="Nakagawa K."/>
            <person name="Okumura K."/>
            <person name="Nagase T."/>
            <person name="Nomura N."/>
            <person name="Kikuchi H."/>
            <person name="Masuho Y."/>
            <person name="Yamashita R."/>
            <person name="Nakai K."/>
            <person name="Yada T."/>
            <person name="Nakamura Y."/>
            <person name="Ohara O."/>
            <person name="Isogai T."/>
            <person name="Sugano S."/>
        </authorList>
    </citation>
    <scope>NUCLEOTIDE SEQUENCE [LARGE SCALE MRNA] (ISOFORM 1)</scope>
    <source>
        <tissue>Embryo</tissue>
    </source>
</reference>
<reference key="3">
    <citation type="submission" date="2005-04" db="EMBL/GenBank/DDBJ databases">
        <authorList>
            <person name="Suzuki Y."/>
            <person name="Sugano S."/>
            <person name="Totoki Y."/>
            <person name="Toyoda A."/>
            <person name="Takeda T."/>
            <person name="Sakaki Y."/>
            <person name="Tanaka A."/>
            <person name="Yokoyama S."/>
        </authorList>
    </citation>
    <scope>NUCLEOTIDE SEQUENCE [LARGE SCALE MRNA] (ISOFORM 1)</scope>
    <source>
        <tissue>Kidney</tissue>
    </source>
</reference>
<reference key="4">
    <citation type="journal article" date="2005" name="Nature">
        <title>Generation and annotation of the DNA sequences of human chromosomes 2 and 4.</title>
        <authorList>
            <person name="Hillier L.W."/>
            <person name="Graves T.A."/>
            <person name="Fulton R.S."/>
            <person name="Fulton L.A."/>
            <person name="Pepin K.H."/>
            <person name="Minx P."/>
            <person name="Wagner-McPherson C."/>
            <person name="Layman D."/>
            <person name="Wylie K."/>
            <person name="Sekhon M."/>
            <person name="Becker M.C."/>
            <person name="Fewell G.A."/>
            <person name="Delehaunty K.D."/>
            <person name="Miner T.L."/>
            <person name="Nash W.E."/>
            <person name="Kremitzki C."/>
            <person name="Oddy L."/>
            <person name="Du H."/>
            <person name="Sun H."/>
            <person name="Bradshaw-Cordum H."/>
            <person name="Ali J."/>
            <person name="Carter J."/>
            <person name="Cordes M."/>
            <person name="Harris A."/>
            <person name="Isak A."/>
            <person name="van Brunt A."/>
            <person name="Nguyen C."/>
            <person name="Du F."/>
            <person name="Courtney L."/>
            <person name="Kalicki J."/>
            <person name="Ozersky P."/>
            <person name="Abbott S."/>
            <person name="Armstrong J."/>
            <person name="Belter E.A."/>
            <person name="Caruso L."/>
            <person name="Cedroni M."/>
            <person name="Cotton M."/>
            <person name="Davidson T."/>
            <person name="Desai A."/>
            <person name="Elliott G."/>
            <person name="Erb T."/>
            <person name="Fronick C."/>
            <person name="Gaige T."/>
            <person name="Haakenson W."/>
            <person name="Haglund K."/>
            <person name="Holmes A."/>
            <person name="Harkins R."/>
            <person name="Kim K."/>
            <person name="Kruchowski S.S."/>
            <person name="Strong C.M."/>
            <person name="Grewal N."/>
            <person name="Goyea E."/>
            <person name="Hou S."/>
            <person name="Levy A."/>
            <person name="Martinka S."/>
            <person name="Mead K."/>
            <person name="McLellan M.D."/>
            <person name="Meyer R."/>
            <person name="Randall-Maher J."/>
            <person name="Tomlinson C."/>
            <person name="Dauphin-Kohlberg S."/>
            <person name="Kozlowicz-Reilly A."/>
            <person name="Shah N."/>
            <person name="Swearengen-Shahid S."/>
            <person name="Snider J."/>
            <person name="Strong J.T."/>
            <person name="Thompson J."/>
            <person name="Yoakum M."/>
            <person name="Leonard S."/>
            <person name="Pearman C."/>
            <person name="Trani L."/>
            <person name="Radionenko M."/>
            <person name="Waligorski J.E."/>
            <person name="Wang C."/>
            <person name="Rock S.M."/>
            <person name="Tin-Wollam A.-M."/>
            <person name="Maupin R."/>
            <person name="Latreille P."/>
            <person name="Wendl M.C."/>
            <person name="Yang S.-P."/>
            <person name="Pohl C."/>
            <person name="Wallis J.W."/>
            <person name="Spieth J."/>
            <person name="Bieri T.A."/>
            <person name="Berkowicz N."/>
            <person name="Nelson J.O."/>
            <person name="Osborne J."/>
            <person name="Ding L."/>
            <person name="Meyer R."/>
            <person name="Sabo A."/>
            <person name="Shotland Y."/>
            <person name="Sinha P."/>
            <person name="Wohldmann P.E."/>
            <person name="Cook L.L."/>
            <person name="Hickenbotham M.T."/>
            <person name="Eldred J."/>
            <person name="Williams D."/>
            <person name="Jones T.A."/>
            <person name="She X."/>
            <person name="Ciccarelli F.D."/>
            <person name="Izaurralde E."/>
            <person name="Taylor J."/>
            <person name="Schmutz J."/>
            <person name="Myers R.M."/>
            <person name="Cox D.R."/>
            <person name="Huang X."/>
            <person name="McPherson J.D."/>
            <person name="Mardis E.R."/>
            <person name="Clifton S.W."/>
            <person name="Warren W.C."/>
            <person name="Chinwalla A.T."/>
            <person name="Eddy S.R."/>
            <person name="Marra M.A."/>
            <person name="Ovcharenko I."/>
            <person name="Furey T.S."/>
            <person name="Miller W."/>
            <person name="Eichler E.E."/>
            <person name="Bork P."/>
            <person name="Suyama M."/>
            <person name="Torrents D."/>
            <person name="Waterston R.H."/>
            <person name="Wilson R.K."/>
        </authorList>
    </citation>
    <scope>NUCLEOTIDE SEQUENCE [LARGE SCALE GENOMIC DNA]</scope>
</reference>
<reference key="5">
    <citation type="submission" date="2005-07" db="EMBL/GenBank/DDBJ databases">
        <authorList>
            <person name="Mural R.J."/>
            <person name="Istrail S."/>
            <person name="Sutton G.G."/>
            <person name="Florea L."/>
            <person name="Halpern A.L."/>
            <person name="Mobarry C.M."/>
            <person name="Lippert R."/>
            <person name="Walenz B."/>
            <person name="Shatkay H."/>
            <person name="Dew I."/>
            <person name="Miller J.R."/>
            <person name="Flanigan M.J."/>
            <person name="Edwards N.J."/>
            <person name="Bolanos R."/>
            <person name="Fasulo D."/>
            <person name="Halldorsson B.V."/>
            <person name="Hannenhalli S."/>
            <person name="Turner R."/>
            <person name="Yooseph S."/>
            <person name="Lu F."/>
            <person name="Nusskern D.R."/>
            <person name="Shue B.C."/>
            <person name="Zheng X.H."/>
            <person name="Zhong F."/>
            <person name="Delcher A.L."/>
            <person name="Huson D.H."/>
            <person name="Kravitz S.A."/>
            <person name="Mouchard L."/>
            <person name="Reinert K."/>
            <person name="Remington K.A."/>
            <person name="Clark A.G."/>
            <person name="Waterman M.S."/>
            <person name="Eichler E.E."/>
            <person name="Adams M.D."/>
            <person name="Hunkapiller M.W."/>
            <person name="Myers E.W."/>
            <person name="Venter J.C."/>
        </authorList>
    </citation>
    <scope>NUCLEOTIDE SEQUENCE [LARGE SCALE GENOMIC DNA]</scope>
</reference>
<reference key="6">
    <citation type="journal article" date="2004" name="Genome Res.">
        <title>The status, quality, and expansion of the NIH full-length cDNA project: the Mammalian Gene Collection (MGC).</title>
        <authorList>
            <consortium name="The MGC Project Team"/>
        </authorList>
    </citation>
    <scope>NUCLEOTIDE SEQUENCE [LARGE SCALE MRNA]</scope>
    <source>
        <tissue>Lymph</tissue>
    </source>
</reference>
<reference key="7">
    <citation type="journal article" date="2011" name="BMC Syst. Biol.">
        <title>Initial characterization of the human central proteome.</title>
        <authorList>
            <person name="Burkard T.R."/>
            <person name="Planyavsky M."/>
            <person name="Kaupe I."/>
            <person name="Breitwieser F.P."/>
            <person name="Buerckstuemmer T."/>
            <person name="Bennett K.L."/>
            <person name="Superti-Furga G."/>
            <person name="Colinge J."/>
        </authorList>
    </citation>
    <scope>IDENTIFICATION BY MASS SPECTROMETRY [LARGE SCALE ANALYSIS]</scope>
</reference>
<reference evidence="6 7 8" key="8">
    <citation type="journal article" date="2021" name="Nat. Struct. Mol. Biol.">
        <title>Cryo-EM structures of human GMPPA-GMPPB complex reveal how cells maintain GDP-mannose homeostasis.</title>
        <authorList>
            <person name="Zheng L."/>
            <person name="Liu Z."/>
            <person name="Wang Y."/>
            <person name="Yang F."/>
            <person name="Wang J."/>
            <person name="Huang W."/>
            <person name="Qin J."/>
            <person name="Tian M."/>
            <person name="Cai X."/>
            <person name="Liu X."/>
            <person name="Mo X."/>
            <person name="Gao N."/>
            <person name="Jia D."/>
        </authorList>
    </citation>
    <scope>STRUCTURE BY ELECTRON MICROSCOPY (3.0 ANGSTROMS) OF 1-420 IN COMPLEXES WITH GMPPB; MG2+; GTP AND GDP-MANNOSE</scope>
    <scope>FUNCTION</scope>
    <scope>PATHWAY</scope>
    <scope>SUBUNIT</scope>
    <scope>DOMAIN</scope>
    <scope>CHARACTERIZATION OF VARIANTS AAMR PRO-334 AND THR-401</scope>
    <scope>MUTAGENESIS OF GLU-85; ARG-99; ASP-100; GLN-247; ARG-318; TRP-350; ARG-352; 362-PRO--PRO-365; GLU-372; GLU-396 AND LYS-408</scope>
</reference>
<reference key="9">
    <citation type="journal article" date="2013" name="Am. J. Hum. Genet.">
        <title>Mutations in GMPPA cause a glycosylation disorder characterized by intellectual disability and autonomic dysfunction.</title>
        <authorList>
            <person name="Koehler K."/>
            <person name="Malik M."/>
            <person name="Mahmood S."/>
            <person name="Giesselmann S."/>
            <person name="Beetz C."/>
            <person name="Hennings J.C."/>
            <person name="Huebner A.K."/>
            <person name="Grahn A."/>
            <person name="Reunert J."/>
            <person name="Nurnberg G."/>
            <person name="Thiele H."/>
            <person name="Altmuller J."/>
            <person name="Nurnberg P."/>
            <person name="Mumtaz R."/>
            <person name="Babovic-Vuksanovic D."/>
            <person name="Basel-Vanagaite L."/>
            <person name="Borck G."/>
            <person name="Bramswig J."/>
            <person name="Muhlenberg R."/>
            <person name="Sarda P."/>
            <person name="Sikiric A."/>
            <person name="Anyane-Yeboa K."/>
            <person name="Zeharia A."/>
            <person name="Ahmad A."/>
            <person name="Coubes C."/>
            <person name="Wada Y."/>
            <person name="Marquardt T."/>
            <person name="Vanderschaeghe D."/>
            <person name="Van Schaftingen E."/>
            <person name="Kurth I."/>
            <person name="Huebner A."/>
            <person name="Hubner C.A."/>
        </authorList>
    </citation>
    <scope>VARIANTS AAMR ASP-182; MET-334; PRO-334; PRO-390 AND THR-401</scope>
    <scope>FUNCTION</scope>
    <scope>SUBCELLULAR LOCATION</scope>
    <scope>TISSUE SPECIFICITY</scope>
</reference>
<organism evidence="9">
    <name type="scientific">Homo sapiens</name>
    <name type="common">Human</name>
    <dbReference type="NCBI Taxonomy" id="9606"/>
    <lineage>
        <taxon>Eukaryota</taxon>
        <taxon>Metazoa</taxon>
        <taxon>Chordata</taxon>
        <taxon>Craniata</taxon>
        <taxon>Vertebrata</taxon>
        <taxon>Euteleostomi</taxon>
        <taxon>Mammalia</taxon>
        <taxon>Eutheria</taxon>
        <taxon>Euarchontoglires</taxon>
        <taxon>Primates</taxon>
        <taxon>Haplorrhini</taxon>
        <taxon>Catarrhini</taxon>
        <taxon>Hominidae</taxon>
        <taxon>Homo</taxon>
    </lineage>
</organism>
<feature type="chain" id="PRO_0000327872" description="Mannose-1-phosphate guanylyltransferase regulatory subunit alpha">
    <location>
        <begin position="1"/>
        <end position="420"/>
    </location>
</feature>
<feature type="region of interest" description="Substrate-binding domain" evidence="2">
    <location>
        <begin position="2"/>
        <end position="251"/>
    </location>
</feature>
<feature type="region of interest" description="Hexapeptide repeat domain" evidence="2">
    <location>
        <begin position="273"/>
        <end position="420"/>
    </location>
</feature>
<feature type="region of interest" description="C-loop" evidence="2">
    <location>
        <begin position="356"/>
        <end position="384"/>
    </location>
</feature>
<feature type="binding site" evidence="2">
    <location>
        <position position="85"/>
    </location>
    <ligand>
        <name>GDP-alpha-D-mannose</name>
        <dbReference type="ChEBI" id="CHEBI:57527"/>
    </ligand>
</feature>
<feature type="binding site" evidence="2">
    <location>
        <position position="247"/>
    </location>
    <ligand>
        <name>GDP-alpha-D-mannose</name>
        <dbReference type="ChEBI" id="CHEBI:57527"/>
    </ligand>
</feature>
<feature type="splice variant" id="VSP_032741" description="In isoform 2." evidence="3">
    <original>G</original>
    <variation>GTQPAPIPNLWLPPQPSEPGFLTSSPELKPQSLPLPDQIRFGIFAPRASLLLLG</variation>
    <location>
        <position position="285"/>
    </location>
</feature>
<feature type="sequence variant" id="VAR_042434" description="In dbSNP:rs34218609.">
    <original>S</original>
    <variation>F</variation>
    <location>
        <position position="21"/>
    </location>
</feature>
<feature type="sequence variant" id="VAR_042435" description="In dbSNP:rs13396066.">
    <original>V</original>
    <variation>A</variation>
    <location>
        <position position="156"/>
    </location>
</feature>
<feature type="sequence variant" id="VAR_070203" description="In AAMR; drastically reduced protein expression; dbSNP:rs397518462." evidence="1">
    <original>G</original>
    <variation>D</variation>
    <location>
        <position position="182"/>
    </location>
</feature>
<feature type="sequence variant" id="VAR_070204" description="In AAMR; dbSNP:rs774778439." evidence="1">
    <original>T</original>
    <variation>M</variation>
    <location>
        <position position="334"/>
    </location>
</feature>
<feature type="sequence variant" id="VAR_070205" description="In AAMR; drastically reduced protein expression; reduces allosteric inhibition of GMPPB; fails to rescue phenotype when expressed in a zebrafish disease model; dbSNP:rs397518461." evidence="1 2">
    <original>T</original>
    <variation>P</variation>
    <location>
        <position position="334"/>
    </location>
</feature>
<feature type="sequence variant" id="VAR_070206" description="In AAMR; drastically reduced protein expression; dbSNP:rs1467274040." evidence="1">
    <original>R</original>
    <variation>P</variation>
    <location>
        <position position="390"/>
    </location>
</feature>
<feature type="sequence variant" id="VAR_070207" description="In AAMR; drastically reduced protein expression; reduces allosteric inhibition of GMPPB; fails to rescue phenotype when expressed in a zebrafish disease model." evidence="1 2">
    <original>N</original>
    <variation>T</variation>
    <location>
        <position position="401"/>
    </location>
</feature>
<feature type="mutagenesis site" description="Reduces GDP-alpha-D-mannose binding affinity but does not affect assembly of GMPPA-GMPPB complex; when associated with A-247. Does not rescue the knockdown phenotype in a zebrafish disease model; when associated with A-247." evidence="2">
    <original>E</original>
    <variation>K</variation>
    <location>
        <position position="85"/>
    </location>
</feature>
<feature type="mutagenesis site" description="Does not disrupt the interaction with GMPPB or other GMPPA molecules." evidence="2">
    <original>R</original>
    <variation>E</variation>
    <location>
        <position position="99"/>
    </location>
</feature>
<feature type="mutagenesis site" description="Does not disrupt the interaction with GMPPB or other GMPPA molecules." evidence="2">
    <original>D</original>
    <variation>R</variation>
    <location>
        <position position="100"/>
    </location>
</feature>
<feature type="mutagenesis site" description="Reduces GDP-alpha-D-mannose binding affinity but does not affect assembly of GMPPA-GMPPB complex; when associated with K-85. Does not rescue the knockdown phenotype in a zebrafish disease model; when associated with K-85." evidence="2">
    <original>Q</original>
    <variation>A</variation>
    <location>
        <position position="247"/>
    </location>
</feature>
<feature type="mutagenesis site" description="Does not instate mannose-1-phosphate guanylyltransferase catalytic activity." evidence="2">
    <original>Q</original>
    <variation>D</variation>
    <location>
        <position position="247"/>
    </location>
</feature>
<feature type="mutagenesis site" description="Disrupts the interaction with GMPPB and other GMPPA molecules." evidence="2">
    <original>R</original>
    <variation>E</variation>
    <location>
        <position position="318"/>
    </location>
</feature>
<feature type="mutagenesis site" description="Disrupts the interaction with GMPPB and other GMPPA molecules and reduces the efficiency of GMPPB allosteric inhibition; when associated with A-352." evidence="2">
    <original>W</original>
    <variation>A</variation>
    <location>
        <position position="350"/>
    </location>
</feature>
<feature type="mutagenesis site" description="Disrupts the interaction with GMPPB and other GMPPA molecules and reduces the efficiency of GMPPB allosteric inhibition; when associated with A-350." evidence="2">
    <original>R</original>
    <variation>A</variation>
    <location>
        <position position="352"/>
    </location>
</feature>
<feature type="mutagenesis site" description="Reduces the interaction with GMPPB and decreases efficiency of GMPPB inhibition." evidence="2">
    <original>PNDP</original>
    <variation>AADA</variation>
    <location>
        <begin position="362"/>
        <end position="365"/>
    </location>
</feature>
<feature type="mutagenesis site" description="Reduces the efficiency of GMPPB allosteric inhibition." evidence="2">
    <original>E</original>
    <variation>A</variation>
    <location>
        <position position="372"/>
    </location>
</feature>
<feature type="mutagenesis site" description="Disrupts the interaction with other GMPPA molecules slightly but not with GMPPB." evidence="2">
    <original>E</original>
    <variation>R</variation>
    <location>
        <position position="372"/>
    </location>
</feature>
<feature type="mutagenesis site" description="Disrupts the interaction with other GMPPA molecules but not with GMPPB." evidence="2">
    <original>E</original>
    <variation>R</variation>
    <location>
        <position position="396"/>
    </location>
</feature>
<feature type="mutagenesis site" description="Does not disrupt the interaction with GMPPB or other GMPPA molecules." evidence="2">
    <original>K</original>
    <variation>E</variation>
    <location>
        <position position="408"/>
    </location>
</feature>
<feature type="sequence conflict" description="In Ref. 3; BAD96671." evidence="3" ref="3">
    <original>G</original>
    <variation>C</variation>
    <location>
        <position position="57"/>
    </location>
</feature>
<feature type="sequence conflict" description="In Ref. 2; BAF83360." evidence="3" ref="2">
    <original>Q</original>
    <variation>H</variation>
    <location>
        <position position="67"/>
    </location>
</feature>
<feature type="sequence conflict" description="In Ref. 2; BAA91460." evidence="3" ref="2">
    <original>C</original>
    <variation>Y</variation>
    <location>
        <position position="118"/>
    </location>
</feature>
<feature type="sequence conflict" description="In Ref. 1; AAD38517." evidence="3" ref="1">
    <original>S</original>
    <variation>C</variation>
    <location>
        <position position="339"/>
    </location>
</feature>
<feature type="strand" evidence="11">
    <location>
        <begin position="2"/>
        <end position="7"/>
    </location>
</feature>
<feature type="turn" evidence="11">
    <location>
        <begin position="11"/>
        <end position="14"/>
    </location>
</feature>
<feature type="helix" evidence="12">
    <location>
        <begin position="15"/>
        <end position="17"/>
    </location>
</feature>
<feature type="strand" evidence="11">
    <location>
        <begin position="22"/>
        <end position="24"/>
    </location>
</feature>
<feature type="helix" evidence="11">
    <location>
        <begin position="26"/>
        <end position="28"/>
    </location>
</feature>
<feature type="strand" evidence="11">
    <location>
        <begin position="29"/>
        <end position="31"/>
    </location>
</feature>
<feature type="helix" evidence="11">
    <location>
        <begin position="36"/>
        <end position="46"/>
    </location>
</feature>
<feature type="strand" evidence="11">
    <location>
        <begin position="50"/>
        <end position="57"/>
    </location>
</feature>
<feature type="helix" evidence="11">
    <location>
        <begin position="63"/>
        <end position="76"/>
    </location>
</feature>
<feature type="strand" evidence="11">
    <location>
        <begin position="80"/>
        <end position="84"/>
    </location>
</feature>
<feature type="helix" evidence="11">
    <location>
        <begin position="90"/>
        <end position="97"/>
    </location>
</feature>
<feature type="helix" evidence="11">
    <location>
        <begin position="99"/>
        <end position="102"/>
    </location>
</feature>
<feature type="strand" evidence="11">
    <location>
        <begin position="108"/>
        <end position="119"/>
    </location>
</feature>
<feature type="helix" evidence="11">
    <location>
        <begin position="123"/>
        <end position="133"/>
    </location>
</feature>
<feature type="strand" evidence="11">
    <location>
        <begin position="136"/>
        <end position="143"/>
    </location>
</feature>
<feature type="helix" evidence="11">
    <location>
        <begin position="148"/>
        <end position="151"/>
    </location>
</feature>
<feature type="strand" evidence="11">
    <location>
        <begin position="154"/>
        <end position="158"/>
    </location>
</feature>
<feature type="turn" evidence="11">
    <location>
        <begin position="159"/>
        <end position="162"/>
    </location>
</feature>
<feature type="strand" evidence="11">
    <location>
        <begin position="163"/>
        <end position="170"/>
    </location>
</feature>
<feature type="strand" evidence="11">
    <location>
        <begin position="177"/>
        <end position="186"/>
    </location>
</feature>
<feature type="turn" evidence="11">
    <location>
        <begin position="188"/>
        <end position="190"/>
    </location>
</feature>
<feature type="helix" evidence="11">
    <location>
        <begin position="191"/>
        <end position="201"/>
    </location>
</feature>
<feature type="helix" evidence="11">
    <location>
        <begin position="222"/>
        <end position="225"/>
    </location>
</feature>
<feature type="turn" evidence="11">
    <location>
        <begin position="226"/>
        <end position="229"/>
    </location>
</feature>
<feature type="turn" evidence="11">
    <location>
        <begin position="231"/>
        <end position="234"/>
    </location>
</feature>
<feature type="strand" evidence="11">
    <location>
        <begin position="236"/>
        <end position="240"/>
    </location>
</feature>
<feature type="strand" evidence="11">
    <location>
        <begin position="245"/>
        <end position="247"/>
    </location>
</feature>
<feature type="helix" evidence="11">
    <location>
        <begin position="251"/>
        <end position="268"/>
    </location>
</feature>
<feature type="turn" evidence="11">
    <location>
        <begin position="270"/>
        <end position="272"/>
    </location>
</feature>
<feature type="strand" evidence="11">
    <location>
        <begin position="285"/>
        <end position="289"/>
    </location>
</feature>
<feature type="strand" evidence="11">
    <location>
        <begin position="305"/>
        <end position="307"/>
    </location>
</feature>
<feature type="strand" evidence="11">
    <location>
        <begin position="318"/>
        <end position="321"/>
    </location>
</feature>
<feature type="strand" evidence="11">
    <location>
        <begin position="335"/>
        <end position="341"/>
    </location>
</feature>
<feature type="strand" evidence="11">
    <location>
        <begin position="352"/>
        <end position="354"/>
    </location>
</feature>
<feature type="strand" evidence="10">
    <location>
        <begin position="362"/>
        <end position="366"/>
    </location>
</feature>
<feature type="strand" evidence="11">
    <location>
        <begin position="374"/>
        <end position="380"/>
    </location>
</feature>
<feature type="strand" evidence="11">
    <location>
        <begin position="385"/>
        <end position="387"/>
    </location>
</feature>
<feature type="strand" evidence="11">
    <location>
        <begin position="398"/>
        <end position="401"/>
    </location>
</feature>
<feature type="strand" evidence="11">
    <location>
        <begin position="414"/>
        <end position="416"/>
    </location>
</feature>
<accession>Q96IJ6</accession>
<accession>A6NJ74</accession>
<accession>A8K3Q6</accession>
<accession>B3KMT4</accession>
<accession>Q53GI0</accession>
<accession>Q9NWC3</accession>
<accession>Q9Y5P5</accession>